<keyword id="KW-0456">Lyase</keyword>
<keyword id="KW-0472">Membrane</keyword>
<keyword id="KW-1185">Reference proteome</keyword>
<keyword id="KW-0812">Transmembrane</keyword>
<keyword id="KW-1133">Transmembrane helix</keyword>
<gene>
    <name evidence="4" type="primary">tcpK</name>
    <name type="ORF">CPUR_02674</name>
</gene>
<feature type="chain" id="PRO_0000437728" description="Gamma-glutamyl cyclotransferase gliK">
    <location>
        <begin position="1"/>
        <end position="222"/>
    </location>
</feature>
<feature type="transmembrane region" description="Helical" evidence="2">
    <location>
        <begin position="154"/>
        <end position="174"/>
    </location>
</feature>
<feature type="transmembrane region" description="Helical" evidence="2">
    <location>
        <begin position="187"/>
        <end position="207"/>
    </location>
</feature>
<organism>
    <name type="scientific">Claviceps purpurea (strain 20.1)</name>
    <name type="common">Ergot fungus</name>
    <name type="synonym">Sphacelia segetum</name>
    <dbReference type="NCBI Taxonomy" id="1111077"/>
    <lineage>
        <taxon>Eukaryota</taxon>
        <taxon>Fungi</taxon>
        <taxon>Dikarya</taxon>
        <taxon>Ascomycota</taxon>
        <taxon>Pezizomycotina</taxon>
        <taxon>Sordariomycetes</taxon>
        <taxon>Hypocreomycetidae</taxon>
        <taxon>Hypocreales</taxon>
        <taxon>Clavicipitaceae</taxon>
        <taxon>Claviceps</taxon>
    </lineage>
</organism>
<evidence type="ECO:0000250" key="1">
    <source>
        <dbReference type="UniProtKB" id="E9R9Y3"/>
    </source>
</evidence>
<evidence type="ECO:0000255" key="2"/>
<evidence type="ECO:0000269" key="3">
    <source>
    </source>
</evidence>
<evidence type="ECO:0000303" key="4">
    <source>
    </source>
</evidence>
<evidence type="ECO:0000305" key="5"/>
<evidence type="ECO:0000305" key="6">
    <source>
    </source>
</evidence>
<reference key="1">
    <citation type="journal article" date="2013" name="PLoS Genet.">
        <title>Plant-symbiotic fungi as chemical engineers: Multi-genome analysis of the Clavicipitaceae reveals dynamics of alkaloid loci.</title>
        <authorList>
            <person name="Schardl C.L."/>
            <person name="Young C.A."/>
            <person name="Hesse U."/>
            <person name="Amyotte S.G."/>
            <person name="Andreeva K."/>
            <person name="Calie P.J."/>
            <person name="Fleetwood D.J."/>
            <person name="Haws D.C."/>
            <person name="Moore N."/>
            <person name="Oeser B."/>
            <person name="Panaccione D.G."/>
            <person name="Schweri K.K."/>
            <person name="Voisey C.R."/>
            <person name="Farman M.L."/>
            <person name="Jaromczyk J.W."/>
            <person name="Roe B.A."/>
            <person name="O'Sullivan D.M."/>
            <person name="Scott B."/>
            <person name="Tudzynski P."/>
            <person name="An Z."/>
            <person name="Arnaoudova E.G."/>
            <person name="Bullock C.T."/>
            <person name="Charlton N.D."/>
            <person name="Chen L."/>
            <person name="Cox M."/>
            <person name="Dinkins R.D."/>
            <person name="Florea S."/>
            <person name="Glenn A.E."/>
            <person name="Gordon A."/>
            <person name="Gueldener U."/>
            <person name="Harris D.R."/>
            <person name="Hollin W."/>
            <person name="Jaromczyk J."/>
            <person name="Johnson R.D."/>
            <person name="Khan A.K."/>
            <person name="Leistner E."/>
            <person name="Leuchtmann A."/>
            <person name="Li C."/>
            <person name="Liu J."/>
            <person name="Liu J."/>
            <person name="Liu M."/>
            <person name="Mace W."/>
            <person name="Machado C."/>
            <person name="Nagabhyru P."/>
            <person name="Pan J."/>
            <person name="Schmid J."/>
            <person name="Sugawara K."/>
            <person name="Steiner U."/>
            <person name="Takach J.E."/>
            <person name="Tanaka E."/>
            <person name="Webb J.S."/>
            <person name="Wilson E.V."/>
            <person name="Wiseman J.L."/>
            <person name="Yoshida R."/>
            <person name="Zeng Z."/>
        </authorList>
    </citation>
    <scope>NUCLEOTIDE SEQUENCE [LARGE SCALE GENOMIC DNA]</scope>
    <source>
        <strain>20.1</strain>
    </source>
</reference>
<reference key="2">
    <citation type="journal article" date="2016" name="PLoS ONE">
        <title>The epipolythiodiketopiperazine gene cluster in Claviceps purpurea: dysfunctional cytochrome P450 enzyme prevents formation of the previously unknown clapurines.</title>
        <authorList>
            <person name="Dopstadt J."/>
            <person name="Neubauer L."/>
            <person name="Tudzynski P."/>
            <person name="Humpf H.U."/>
        </authorList>
    </citation>
    <scope>FUNCTION</scope>
    <scope>INDUCTION</scope>
</reference>
<proteinExistence type="evidence at transcript level"/>
<accession>M1W855</accession>
<comment type="function">
    <text evidence="3">Gamma-glutamyl cyclotransferase; part of the gene cluster that mediates the biosynthesis of an unusual class of epipolythiodioxopiperazines (ETPs) lacking the reactive thiol group important for toxicity (PubMed:27390873). Firstly, L-tyrosine is prenylated by tcpD, before undergoing condensation with L-glycine in a reaction catalyzed by the NRPS tcpP leading to the diketopiperazine (DKP) backbone (PubMed:27390873). Afterwards the alpha-carbon of tyrosine is oxidized by the cytochrome P450 tcpC to form a hydroxyl group (PubMed:27390873). However, in contrast other ETP biosynthesis pathways studied so far, tcpC is not able to bishydroxylate the DKP at both alpha-carbon positions, but hydroxylates the alpha-carbon of the tyrosine part and the nitrogen of the glycine part (PubMed:27390873). The next steps involve an alpha,beta-elimination reaction catalyzed by tcpI, a methylation by the methyltransferase tcpN the action of the four enzyme cascade tcpG/K/J/I (PubMed:27390873). Due to a dysfunctional cytochrome P450 monooxygenase tcpC, the pathway leads to the biosynthesis of probable non-toxic metabolites lacking the reactive thiol group (PubMed:27390873).</text>
</comment>
<comment type="catalytic activity">
    <reaction evidence="6">
        <text>an alpha-(gamma-L-glutamyl)-L-amino acid = 5-oxo-L-proline + an L-alpha-amino acid</text>
        <dbReference type="Rhea" id="RHEA:20505"/>
        <dbReference type="ChEBI" id="CHEBI:58402"/>
        <dbReference type="ChEBI" id="CHEBI:59869"/>
        <dbReference type="ChEBI" id="CHEBI:71304"/>
        <dbReference type="EC" id="4.3.2.9"/>
    </reaction>
</comment>
<comment type="pathway">
    <text evidence="6">Secondary metabolite biosynthesis.</text>
</comment>
<comment type="subcellular location">
    <subcellularLocation>
        <location evidence="2">Membrane</location>
        <topology evidence="2">Multi-pass membrane protein</topology>
    </subcellularLocation>
</comment>
<comment type="induction">
    <text evidence="3">Expression is positively regulated by the thioclapurine cluster-specific transcription factor tcpZ (PubMed:27390873).</text>
</comment>
<comment type="similarity">
    <text evidence="5">Belongs to the class-I pyridoxal-phosphate-dependent aminotransferase family.</text>
</comment>
<dbReference type="EC" id="4.3.2.9" evidence="6"/>
<dbReference type="EMBL" id="CAGA01000011">
    <property type="protein sequence ID" value="CCE28983.1"/>
    <property type="molecule type" value="Genomic_DNA"/>
</dbReference>
<dbReference type="SMR" id="M1W855"/>
<dbReference type="STRING" id="1111077.M1W855"/>
<dbReference type="VEuPathDB" id="FungiDB:CPUR_02674"/>
<dbReference type="eggNOG" id="ENOG502SBD2">
    <property type="taxonomic scope" value="Eukaryota"/>
</dbReference>
<dbReference type="HOGENOM" id="CLU_030506_0_0_1"/>
<dbReference type="OrthoDB" id="2017317at2759"/>
<dbReference type="Proteomes" id="UP000016801">
    <property type="component" value="Unassembled WGS sequence"/>
</dbReference>
<dbReference type="GO" id="GO:0016020">
    <property type="term" value="C:membrane"/>
    <property type="evidence" value="ECO:0007669"/>
    <property type="project" value="UniProtKB-SubCell"/>
</dbReference>
<dbReference type="GO" id="GO:0003839">
    <property type="term" value="F:gamma-glutamylcyclotransferase activity"/>
    <property type="evidence" value="ECO:0007669"/>
    <property type="project" value="UniProtKB-EC"/>
</dbReference>
<dbReference type="Gene3D" id="3.10.490.10">
    <property type="entry name" value="Gamma-glutamyl cyclotransferase-like"/>
    <property type="match status" value="1"/>
</dbReference>
<sequence>MSASVFIERRKIRPLRTEAACIPTHALCFNVLGIPYMDPGNGGIRPLNPDDSDATACVHGVAYLLTSDDLKKVILSEGGGIAYQVARLNAKLLLDDSPIVVDTLIGRHNVDASNERLPSARYIGVLTRGANELNLPLSYQRRLAEQPIYQPKSGWWFQLGVALFLWPWTRAAIITERLVYKHQGPDGHVPAWFLFIFDCLLWLMWAQHDYIHGPIFGRGDGR</sequence>
<protein>
    <recommendedName>
        <fullName evidence="1">Gamma-glutamyl cyclotransferase gliK</fullName>
        <shortName evidence="1">GGCT gliK</shortName>
        <ecNumber evidence="6">4.3.2.9</ecNumber>
    </recommendedName>
    <alternativeName>
        <fullName evidence="4">Thiocalpurine biosynthesis protein K</fullName>
    </alternativeName>
</protein>
<name>TCPK_CLAP2</name>